<proteinExistence type="evidence at protein level"/>
<evidence type="ECO:0000250" key="1"/>
<evidence type="ECO:0000250" key="2">
    <source>
        <dbReference type="UniProtKB" id="O75874"/>
    </source>
</evidence>
<evidence type="ECO:0000250" key="3">
    <source>
        <dbReference type="UniProtKB" id="O88844"/>
    </source>
</evidence>
<evidence type="ECO:0000250" key="4">
    <source>
        <dbReference type="UniProtKB" id="Q9XSG3"/>
    </source>
</evidence>
<evidence type="ECO:0000269" key="5">
    <source>
    </source>
</evidence>
<evidence type="ECO:0000269" key="6">
    <source>
    </source>
</evidence>
<evidence type="ECO:0000305" key="7"/>
<evidence type="ECO:0000305" key="8">
    <source>
    </source>
</evidence>
<feature type="initiator methionine" description="Removed" evidence="2">
    <location>
        <position position="1"/>
    </location>
</feature>
<feature type="chain" id="PRO_0000083580" description="Isocitrate dehydrogenase [NADP] cytoplasmic">
    <location>
        <begin position="2"/>
        <end position="414"/>
    </location>
</feature>
<feature type="binding site" evidence="2">
    <location>
        <begin position="75"/>
        <end position="77"/>
    </location>
    <ligand>
        <name>NADP(+)</name>
        <dbReference type="ChEBI" id="CHEBI:58349"/>
    </ligand>
</feature>
<feature type="binding site" description="in other chain" evidence="2">
    <location>
        <position position="77"/>
    </location>
    <ligand>
        <name>substrate</name>
        <note>ligand shared between two neighboring subunits</note>
    </ligand>
</feature>
<feature type="binding site" evidence="2">
    <location>
        <position position="82"/>
    </location>
    <ligand>
        <name>NADP(+)</name>
        <dbReference type="ChEBI" id="CHEBI:58349"/>
    </ligand>
</feature>
<feature type="binding site" description="in other chain" evidence="2">
    <location>
        <begin position="94"/>
        <end position="100"/>
    </location>
    <ligand>
        <name>substrate</name>
        <note>ligand shared between two neighboring subunits</note>
    </ligand>
</feature>
<feature type="binding site" description="in other chain" evidence="2">
    <location>
        <position position="109"/>
    </location>
    <ligand>
        <name>substrate</name>
        <note>ligand shared between two neighboring subunits</note>
    </ligand>
</feature>
<feature type="binding site" description="in other chain" evidence="2">
    <location>
        <position position="132"/>
    </location>
    <ligand>
        <name>substrate</name>
        <note>ligand shared between two neighboring subunits</note>
    </ligand>
</feature>
<feature type="binding site" evidence="3">
    <location>
        <position position="212"/>
    </location>
    <ligand>
        <name>substrate</name>
        <note>ligand shared between two neighboring subunits</note>
    </ligand>
</feature>
<feature type="binding site" evidence="2">
    <location>
        <position position="252"/>
    </location>
    <ligand>
        <name>Mn(2+)</name>
        <dbReference type="ChEBI" id="CHEBI:29035"/>
        <note>ligand shared between two neighboring subunits</note>
    </ligand>
</feature>
<feature type="binding site" evidence="2">
    <location>
        <position position="260"/>
    </location>
    <ligand>
        <name>NADP(+)</name>
        <dbReference type="ChEBI" id="CHEBI:58349"/>
    </ligand>
</feature>
<feature type="binding site" description="in other chain" evidence="2">
    <location>
        <position position="275"/>
    </location>
    <ligand>
        <name>Mn(2+)</name>
        <dbReference type="ChEBI" id="CHEBI:29035"/>
        <note>ligand shared between two neighboring subunits</note>
    </ligand>
</feature>
<feature type="binding site" description="in other chain" evidence="2">
    <location>
        <position position="279"/>
    </location>
    <ligand>
        <name>Mn(2+)</name>
        <dbReference type="ChEBI" id="CHEBI:29035"/>
        <note>ligand shared between two neighboring subunits</note>
    </ligand>
</feature>
<feature type="binding site" evidence="2">
    <location>
        <begin position="310"/>
        <end position="315"/>
    </location>
    <ligand>
        <name>NADP(+)</name>
        <dbReference type="ChEBI" id="CHEBI:58349"/>
    </ligand>
</feature>
<feature type="binding site" evidence="2">
    <location>
        <position position="328"/>
    </location>
    <ligand>
        <name>NADP(+)</name>
        <dbReference type="ChEBI" id="CHEBI:58349"/>
    </ligand>
</feature>
<feature type="site" description="Critical for catalysis" evidence="1">
    <location>
        <position position="139"/>
    </location>
</feature>
<feature type="site" description="Critical for catalysis" evidence="1">
    <location>
        <position position="212"/>
    </location>
</feature>
<feature type="modified residue" description="N-acetylserine" evidence="2">
    <location>
        <position position="2"/>
    </location>
</feature>
<feature type="modified residue" description="Phosphotyrosine" evidence="2">
    <location>
        <position position="42"/>
    </location>
</feature>
<feature type="modified residue" description="N6-acetyllysine" evidence="3">
    <location>
        <position position="81"/>
    </location>
</feature>
<feature type="modified residue" description="N6-succinyllysine" evidence="3">
    <location>
        <position position="126"/>
    </location>
</feature>
<feature type="modified residue" description="N6-acetyllysine" evidence="3">
    <location>
        <position position="224"/>
    </location>
</feature>
<feature type="modified residue" description="N6-acetyllysine" evidence="3">
    <location>
        <position position="233"/>
    </location>
</feature>
<feature type="modified residue" description="N6-acetyllysine" evidence="3">
    <location>
        <position position="243"/>
    </location>
</feature>
<feature type="modified residue" description="N6-acetyllysine" evidence="2">
    <location>
        <position position="321"/>
    </location>
</feature>
<feature type="modified residue" description="Phosphoserine" evidence="3">
    <location>
        <position position="389"/>
    </location>
</feature>
<feature type="modified residue" description="N6-succinyllysine" evidence="3">
    <location>
        <position position="400"/>
    </location>
</feature>
<accession>P41562</accession>
<accession>P80300</accession>
<comment type="function">
    <text evidence="2 4 5">Catalyzes the NADP(+)-dependent oxidative decarboxylation of isocitrate (D-threo-isocitrate) to 2-ketoglutarate (2-oxoglutarate), which is required by other enzymes such as the phytanoyl-CoA dioxygenase (PubMed:10521434). Plays a critical role in the generation of NADPH, an important cofactor in many biosynthesis pathways (By similarity). May act as a corneal epithelial crystallin and may be involved in maintaining corneal epithelial transparency (By similarity).</text>
</comment>
<comment type="catalytic activity">
    <reaction evidence="8">
        <text>D-threo-isocitrate + NADP(+) = 2-oxoglutarate + CO2 + NADPH</text>
        <dbReference type="Rhea" id="RHEA:19629"/>
        <dbReference type="ChEBI" id="CHEBI:15562"/>
        <dbReference type="ChEBI" id="CHEBI:16526"/>
        <dbReference type="ChEBI" id="CHEBI:16810"/>
        <dbReference type="ChEBI" id="CHEBI:57783"/>
        <dbReference type="ChEBI" id="CHEBI:58349"/>
        <dbReference type="EC" id="1.1.1.42"/>
    </reaction>
    <physiologicalReaction direction="left-to-right" evidence="8">
        <dbReference type="Rhea" id="RHEA:19630"/>
    </physiologicalReaction>
</comment>
<comment type="cofactor">
    <cofactor evidence="3">
        <name>Mg(2+)</name>
        <dbReference type="ChEBI" id="CHEBI:18420"/>
    </cofactor>
    <cofactor evidence="3">
        <name>Mn(2+)</name>
        <dbReference type="ChEBI" id="CHEBI:29035"/>
    </cofactor>
    <text evidence="3">Binds 1 Mg(2+) or Mn(2+) ion per subunit.</text>
</comment>
<comment type="subunit">
    <text evidence="3">Homodimer.</text>
</comment>
<comment type="subcellular location">
    <subcellularLocation>
        <location evidence="5 6">Cytoplasm</location>
        <location evidence="5 6">Cytosol</location>
    </subcellularLocation>
    <subcellularLocation>
        <location evidence="5">Peroxisome</location>
    </subcellularLocation>
</comment>
<comment type="tissue specificity">
    <text evidence="6">Ubiquitous.</text>
</comment>
<comment type="PTM">
    <text>The N-terminus is blocked.</text>
</comment>
<comment type="PTM">
    <text evidence="1">Acetylation at Lys-374 dramatically reduces catalytic activity.</text>
</comment>
<comment type="similarity">
    <text evidence="7">Belongs to the isocitrate and isopropylmalate dehydrogenases family.</text>
</comment>
<reference key="1">
    <citation type="journal article" date="1994" name="J. Biol. Chem.">
        <title>Cytosolic NADP(+)-dependent isocitrate dehydrogenase. Isolation of rat cDNA and study of tissue-specific and developmental expression of mRNA.</title>
        <authorList>
            <person name="Jennings G.T."/>
            <person name="Sechi S."/>
            <person name="Stevenson P.M."/>
            <person name="Tuckey R.C."/>
            <person name="Parmelee D."/>
            <person name="McAlister-Henn L."/>
        </authorList>
    </citation>
    <scope>NUCLEOTIDE SEQUENCE [MRNA]</scope>
    <scope>PARTIAL PROTEIN SEQUENCE</scope>
    <scope>SUBCELLULAR LOCATION</scope>
    <scope>CATALYTIC ACTIVITY</scope>
    <scope>TISSUE SPECIFICITY</scope>
    <source>
        <strain>Sprague-Dawley</strain>
        <tissue>Liver</tissue>
    </source>
</reference>
<reference key="2">
    <citation type="submission" date="2006-11" db="UniProtKB">
        <authorList>
            <person name="Lubec G."/>
            <person name="Afjehi-Sadat L."/>
        </authorList>
    </citation>
    <scope>PROTEIN SEQUENCE OF 389-400</scope>
    <scope>IDENTIFICATION BY MASS SPECTROMETRY</scope>
    <source>
        <strain>Sprague-Dawley</strain>
        <tissue>Spinal cord</tissue>
    </source>
</reference>
<reference key="3">
    <citation type="journal article" date="1994" name="Enzyme Protein">
        <title>Structural characterization of cytosolic NADP(+)-dependent isocitrate dehydrogenase from rat ovary.</title>
        <authorList>
            <person name="Sechi S."/>
            <person name="Parmelee D."/>
            <person name="Roller P.R."/>
            <person name="Jennings G.T."/>
        </authorList>
    </citation>
    <scope>PARTIAL PROTEIN SEQUENCE</scope>
    <scope>CHARACTERIZATION</scope>
    <source>
        <tissue>Ovary</tissue>
    </source>
</reference>
<reference key="4">
    <citation type="journal article" date="1999" name="J. Biol. Chem.">
        <title>The human PICD gene encodes a cytoplasmic and peroxisomal NADP(+)-dependent isocitrate dehydrogenase.</title>
        <authorList>
            <person name="Geisbrecht B.V."/>
            <person name="Gould S.J."/>
        </authorList>
    </citation>
    <scope>SUBCELLULAR LOCATION</scope>
</reference>
<organism>
    <name type="scientific">Rattus norvegicus</name>
    <name type="common">Rat</name>
    <dbReference type="NCBI Taxonomy" id="10116"/>
    <lineage>
        <taxon>Eukaryota</taxon>
        <taxon>Metazoa</taxon>
        <taxon>Chordata</taxon>
        <taxon>Craniata</taxon>
        <taxon>Vertebrata</taxon>
        <taxon>Euteleostomi</taxon>
        <taxon>Mammalia</taxon>
        <taxon>Eutheria</taxon>
        <taxon>Euarchontoglires</taxon>
        <taxon>Glires</taxon>
        <taxon>Rodentia</taxon>
        <taxon>Myomorpha</taxon>
        <taxon>Muroidea</taxon>
        <taxon>Muridae</taxon>
        <taxon>Murinae</taxon>
        <taxon>Rattus</taxon>
    </lineage>
</organism>
<protein>
    <recommendedName>
        <fullName>Isocitrate dehydrogenase [NADP] cytoplasmic</fullName>
        <shortName>IDH</shortName>
        <shortName>IDH1</shortName>
        <ecNumber evidence="6">1.1.1.42</ecNumber>
    </recommendedName>
    <alternativeName>
        <fullName>Cytosolic NADP-isocitrate dehydrogenase</fullName>
    </alternativeName>
    <alternativeName>
        <fullName>IDPc</fullName>
    </alternativeName>
    <alternativeName>
        <fullName>NADP(+)-specific ICDH</fullName>
    </alternativeName>
    <alternativeName>
        <fullName>Oxalosuccinate decarboxylase</fullName>
    </alternativeName>
</protein>
<keyword id="KW-0007">Acetylation</keyword>
<keyword id="KW-0963">Cytoplasm</keyword>
<keyword id="KW-0903">Direct protein sequencing</keyword>
<keyword id="KW-0329">Glyoxylate bypass</keyword>
<keyword id="KW-0460">Magnesium</keyword>
<keyword id="KW-0464">Manganese</keyword>
<keyword id="KW-0479">Metal-binding</keyword>
<keyword id="KW-0521">NADP</keyword>
<keyword id="KW-0560">Oxidoreductase</keyword>
<keyword id="KW-0576">Peroxisome</keyword>
<keyword id="KW-0597">Phosphoprotein</keyword>
<keyword id="KW-1185">Reference proteome</keyword>
<keyword id="KW-0816">Tricarboxylic acid cycle</keyword>
<dbReference type="EC" id="1.1.1.42" evidence="6"/>
<dbReference type="EMBL" id="L35317">
    <property type="protein sequence ID" value="AAA59356.1"/>
    <property type="molecule type" value="mRNA"/>
</dbReference>
<dbReference type="PIR" id="A54756">
    <property type="entry name" value="A54756"/>
</dbReference>
<dbReference type="RefSeq" id="NP_113698.1">
    <property type="nucleotide sequence ID" value="NM_031510.1"/>
</dbReference>
<dbReference type="RefSeq" id="XP_006245111.1">
    <property type="nucleotide sequence ID" value="XM_006245049.5"/>
</dbReference>
<dbReference type="RefSeq" id="XP_008765298.1">
    <property type="nucleotide sequence ID" value="XM_008767076.4"/>
</dbReference>
<dbReference type="RefSeq" id="XP_063122699.1">
    <property type="nucleotide sequence ID" value="XM_063266629.1"/>
</dbReference>
<dbReference type="SMR" id="P41562"/>
<dbReference type="BioGRID" id="246640">
    <property type="interactions" value="2"/>
</dbReference>
<dbReference type="FunCoup" id="P41562">
    <property type="interactions" value="2500"/>
</dbReference>
<dbReference type="STRING" id="10116.ENSRNOP00000020322"/>
<dbReference type="iPTMnet" id="P41562"/>
<dbReference type="PhosphoSitePlus" id="P41562"/>
<dbReference type="jPOST" id="P41562"/>
<dbReference type="PaxDb" id="10116-ENSRNOP00000020322"/>
<dbReference type="Ensembl" id="ENSRNOT00000108404.1">
    <property type="protein sequence ID" value="ENSRNOP00000081635.1"/>
    <property type="gene ID" value="ENSRNOG00000015020.8"/>
</dbReference>
<dbReference type="GeneID" id="24479"/>
<dbReference type="KEGG" id="rno:24479"/>
<dbReference type="UCSC" id="RGD:2862">
    <property type="organism name" value="rat"/>
</dbReference>
<dbReference type="AGR" id="RGD:2862"/>
<dbReference type="CTD" id="3417"/>
<dbReference type="RGD" id="2862">
    <property type="gene designation" value="Idh1"/>
</dbReference>
<dbReference type="eggNOG" id="KOG1526">
    <property type="taxonomic scope" value="Eukaryota"/>
</dbReference>
<dbReference type="GeneTree" id="ENSGT00390000012547"/>
<dbReference type="HOGENOM" id="CLU_023296_1_1_1"/>
<dbReference type="InParanoid" id="P41562"/>
<dbReference type="OMA" id="HGTVQRH"/>
<dbReference type="OrthoDB" id="248923at2759"/>
<dbReference type="PhylomeDB" id="P41562"/>
<dbReference type="BRENDA" id="1.1.1.42">
    <property type="organism ID" value="5301"/>
</dbReference>
<dbReference type="Reactome" id="R-RNO-389542">
    <property type="pathway name" value="NADPH regeneration"/>
</dbReference>
<dbReference type="Reactome" id="R-RNO-6798695">
    <property type="pathway name" value="Neutrophil degranulation"/>
</dbReference>
<dbReference type="Reactome" id="R-RNO-9033241">
    <property type="pathway name" value="Peroxisomal protein import"/>
</dbReference>
<dbReference type="SABIO-RK" id="P41562"/>
<dbReference type="PRO" id="PR:P41562"/>
<dbReference type="Proteomes" id="UP000002494">
    <property type="component" value="Chromosome 9"/>
</dbReference>
<dbReference type="Bgee" id="ENSRNOG00000015020">
    <property type="expression patterns" value="Expressed in ovary and 19 other cell types or tissues"/>
</dbReference>
<dbReference type="GO" id="GO:0005829">
    <property type="term" value="C:cytosol"/>
    <property type="evidence" value="ECO:0000266"/>
    <property type="project" value="RGD"/>
</dbReference>
<dbReference type="GO" id="GO:0005739">
    <property type="term" value="C:mitochondrion"/>
    <property type="evidence" value="ECO:0000266"/>
    <property type="project" value="RGD"/>
</dbReference>
<dbReference type="GO" id="GO:0005782">
    <property type="term" value="C:peroxisomal matrix"/>
    <property type="evidence" value="ECO:0007669"/>
    <property type="project" value="Ensembl"/>
</dbReference>
<dbReference type="GO" id="GO:0005777">
    <property type="term" value="C:peroxisome"/>
    <property type="evidence" value="ECO:0000314"/>
    <property type="project" value="HGNC-UCL"/>
</dbReference>
<dbReference type="GO" id="GO:0042802">
    <property type="term" value="F:identical protein binding"/>
    <property type="evidence" value="ECO:0000266"/>
    <property type="project" value="RGD"/>
</dbReference>
<dbReference type="GO" id="GO:0004450">
    <property type="term" value="F:isocitrate dehydrogenase (NADP+) activity"/>
    <property type="evidence" value="ECO:0000314"/>
    <property type="project" value="RGD"/>
</dbReference>
<dbReference type="GO" id="GO:0000287">
    <property type="term" value="F:magnesium ion binding"/>
    <property type="evidence" value="ECO:0000250"/>
    <property type="project" value="UniProtKB"/>
</dbReference>
<dbReference type="GO" id="GO:0051287">
    <property type="term" value="F:NAD binding"/>
    <property type="evidence" value="ECO:0007669"/>
    <property type="project" value="InterPro"/>
</dbReference>
<dbReference type="GO" id="GO:0050661">
    <property type="term" value="F:NADP binding"/>
    <property type="evidence" value="ECO:0000314"/>
    <property type="project" value="RGD"/>
</dbReference>
<dbReference type="GO" id="GO:0042803">
    <property type="term" value="F:protein homodimerization activity"/>
    <property type="evidence" value="ECO:0000266"/>
    <property type="project" value="RGD"/>
</dbReference>
<dbReference type="GO" id="GO:0006103">
    <property type="term" value="P:2-oxoglutarate metabolic process"/>
    <property type="evidence" value="ECO:0000314"/>
    <property type="project" value="RGD"/>
</dbReference>
<dbReference type="GO" id="GO:0008585">
    <property type="term" value="P:female gonad development"/>
    <property type="evidence" value="ECO:0000270"/>
    <property type="project" value="RGD"/>
</dbReference>
<dbReference type="GO" id="GO:0006749">
    <property type="term" value="P:glutathione metabolic process"/>
    <property type="evidence" value="ECO:0000266"/>
    <property type="project" value="RGD"/>
</dbReference>
<dbReference type="GO" id="GO:0006097">
    <property type="term" value="P:glyoxylate cycle"/>
    <property type="evidence" value="ECO:0007669"/>
    <property type="project" value="UniProtKB-KW"/>
</dbReference>
<dbReference type="GO" id="GO:0006102">
    <property type="term" value="P:isocitrate metabolic process"/>
    <property type="evidence" value="ECO:0000314"/>
    <property type="project" value="RGD"/>
</dbReference>
<dbReference type="GO" id="GO:0006739">
    <property type="term" value="P:NADP metabolic process"/>
    <property type="evidence" value="ECO:0000318"/>
    <property type="project" value="GO_Central"/>
</dbReference>
<dbReference type="GO" id="GO:0006740">
    <property type="term" value="P:NADPH regeneration"/>
    <property type="evidence" value="ECO:0007669"/>
    <property type="project" value="Ensembl"/>
</dbReference>
<dbReference type="GO" id="GO:0071071">
    <property type="term" value="P:regulation of phospholipid biosynthetic process"/>
    <property type="evidence" value="ECO:0000266"/>
    <property type="project" value="RGD"/>
</dbReference>
<dbReference type="GO" id="GO:0060696">
    <property type="term" value="P:regulation of phospholipid catabolic process"/>
    <property type="evidence" value="ECO:0000266"/>
    <property type="project" value="RGD"/>
</dbReference>
<dbReference type="GO" id="GO:0006979">
    <property type="term" value="P:response to oxidative stress"/>
    <property type="evidence" value="ECO:0000266"/>
    <property type="project" value="RGD"/>
</dbReference>
<dbReference type="GO" id="GO:0048545">
    <property type="term" value="P:response to steroid hormone"/>
    <property type="evidence" value="ECO:0000314"/>
    <property type="project" value="RGD"/>
</dbReference>
<dbReference type="GO" id="GO:0006099">
    <property type="term" value="P:tricarboxylic acid cycle"/>
    <property type="evidence" value="ECO:0007669"/>
    <property type="project" value="UniProtKB-KW"/>
</dbReference>
<dbReference type="FunFam" id="3.40.718.10:FF:000002">
    <property type="entry name" value="Isocitrate dehydrogenase [NADP]"/>
    <property type="match status" value="1"/>
</dbReference>
<dbReference type="Gene3D" id="3.40.718.10">
    <property type="entry name" value="Isopropylmalate Dehydrogenase"/>
    <property type="match status" value="1"/>
</dbReference>
<dbReference type="InterPro" id="IPR019818">
    <property type="entry name" value="IsoCit/isopropylmalate_DH_CS"/>
</dbReference>
<dbReference type="InterPro" id="IPR004790">
    <property type="entry name" value="Isocitrate_DH_NADP"/>
</dbReference>
<dbReference type="InterPro" id="IPR024084">
    <property type="entry name" value="IsoPropMal-DH-like_dom"/>
</dbReference>
<dbReference type="NCBIfam" id="TIGR00127">
    <property type="entry name" value="nadp_idh_euk"/>
    <property type="match status" value="1"/>
</dbReference>
<dbReference type="NCBIfam" id="NF006156">
    <property type="entry name" value="PRK08299.1"/>
    <property type="match status" value="1"/>
</dbReference>
<dbReference type="PANTHER" id="PTHR11822:SF21">
    <property type="entry name" value="ISOCITRATE DEHYDROGENASE [NADP], MITOCHONDRIAL"/>
    <property type="match status" value="1"/>
</dbReference>
<dbReference type="PANTHER" id="PTHR11822">
    <property type="entry name" value="NADP-SPECIFIC ISOCITRATE DEHYDROGENASE"/>
    <property type="match status" value="1"/>
</dbReference>
<dbReference type="Pfam" id="PF00180">
    <property type="entry name" value="Iso_dh"/>
    <property type="match status" value="1"/>
</dbReference>
<dbReference type="PIRSF" id="PIRSF000108">
    <property type="entry name" value="IDH_NADP"/>
    <property type="match status" value="1"/>
</dbReference>
<dbReference type="SMART" id="SM01329">
    <property type="entry name" value="Iso_dh"/>
    <property type="match status" value="1"/>
</dbReference>
<dbReference type="SUPFAM" id="SSF53659">
    <property type="entry name" value="Isocitrate/Isopropylmalate dehydrogenase-like"/>
    <property type="match status" value="1"/>
</dbReference>
<dbReference type="PROSITE" id="PS00470">
    <property type="entry name" value="IDH_IMDH"/>
    <property type="match status" value="1"/>
</dbReference>
<sequence length="414" mass="46734">MSRKIHGGSVVEMQGDEMTRIIWELIKEKLILPYVELDLHSYDLGIENRDATNDQVTKDAAEAIKKYNVGVKCATITPDEKRVEEFKLKQMWKSPNGTIRNILGGTVFREAIICKNIPRLVTGWVKPIIIGRHAYGDQYRATDFVVPGPGKVEITYTPKDGSQKVTYLVHDFEEGGGVAMGMYNQDKSIEDFAHSSFQMALSKGWPLYLSTKNTILKKYDGRFKDIFQEIYDKQYKSKFEAQKIWYEHRLIDDMVAQAMKSEGGFIWACKNYDGDVQSDSVAQGYGSLGMMTSVLICPDGKTVEAEAAHGTVTRHYRMYQKGQETSTNPIASIFAWSRGLAHRAKLDNNTELSFFANALEEVCIETIEAGFMTKDLAACIKGLPNVQRSDYLNTFEFMDKLGENLKAKLAQAKL</sequence>
<gene>
    <name type="primary">Idh1</name>
</gene>
<name>IDHC_RAT</name>